<keyword id="KW-0007">Acetylation</keyword>
<keyword id="KW-0067">ATP-binding</keyword>
<keyword id="KW-0963">Cytoplasm</keyword>
<keyword id="KW-0418">Kinase</keyword>
<keyword id="KW-0460">Magnesium</keyword>
<keyword id="KW-0479">Metal-binding</keyword>
<keyword id="KW-0547">Nucleotide-binding</keyword>
<keyword id="KW-0597">Phosphoprotein</keyword>
<keyword id="KW-1185">Reference proteome</keyword>
<keyword id="KW-0723">Serine/threonine-protein kinase</keyword>
<keyword id="KW-0808">Transferase</keyword>
<organism>
    <name type="scientific">Sus scrofa</name>
    <name type="common">Pig</name>
    <dbReference type="NCBI Taxonomy" id="9823"/>
    <lineage>
        <taxon>Eukaryota</taxon>
        <taxon>Metazoa</taxon>
        <taxon>Chordata</taxon>
        <taxon>Craniata</taxon>
        <taxon>Vertebrata</taxon>
        <taxon>Euteleostomi</taxon>
        <taxon>Mammalia</taxon>
        <taxon>Eutheria</taxon>
        <taxon>Laurasiatheria</taxon>
        <taxon>Artiodactyla</taxon>
        <taxon>Suina</taxon>
        <taxon>Suidae</taxon>
        <taxon>Sus</taxon>
    </lineage>
</organism>
<evidence type="ECO:0000250" key="1">
    <source>
        <dbReference type="UniProtKB" id="O95747"/>
    </source>
</evidence>
<evidence type="ECO:0000250" key="2">
    <source>
        <dbReference type="UniProtKB" id="Q6P9R2"/>
    </source>
</evidence>
<evidence type="ECO:0000250" key="3">
    <source>
        <dbReference type="UniProtKB" id="Q9Z1W9"/>
    </source>
</evidence>
<evidence type="ECO:0000255" key="4">
    <source>
        <dbReference type="PROSITE-ProRule" id="PRU00159"/>
    </source>
</evidence>
<evidence type="ECO:0000256" key="5">
    <source>
        <dbReference type="SAM" id="MobiDB-lite"/>
    </source>
</evidence>
<evidence type="ECO:0000305" key="6"/>
<evidence type="ECO:0000312" key="7">
    <source>
        <dbReference type="EMBL" id="AAP32466.1"/>
    </source>
</evidence>
<sequence length="529" mass="58233">MSEDSSALPWSINKDDYELQEVIGSGATAVVQAAYCTPKKEKVAIKRINLEKCQTSMDELLKEIQAMSQCHHPNIVSYYTSFVVKDELWLVMKLLSGGSVLDIIKHIVAKGEHKSGVLDEATIATILREVLEGLEYLHKNGQIHRDVKAGNILLGEDGSVQIADFGVSAFLATGGDITRNKVRKTFVGTPCWMAPEVMEQVRGYDFKADIWSFGITAIELATGAAPYHKYPPMKVLMLTLQNDPPSLETGVQDKEMLKKYGKSFRKMISLCLQKDPEKRPTAAELLRHKFFQKAKNKEYLQEKILQRAPTISERAKKVRRVPGSSGRLHKTEDGGWEWSDDEFDEESEEGKAAISQLRSPRVKESLTNSELFSTTHPVGTLLQVPEQISAHLPQSAGQMPAQLTPVSLPPAAELAPVQAAQAQSSGAGSQETKIPISLVLRLRNSKKELNDIRFEFTPGRDTAEGVSQELISAGLVDGRDLVIVAANLQKIVEEPQSNRSVTFKLASGVEGSDIPDDSKLIGFAQLSIS</sequence>
<protein>
    <recommendedName>
        <fullName>Serine/threonine-protein kinase OSR1</fullName>
        <ecNumber>2.7.11.1</ecNumber>
    </recommendedName>
    <alternativeName>
        <fullName>Oxidative stress-responsive 1 protein</fullName>
    </alternativeName>
</protein>
<accession>Q863I2</accession>
<reference evidence="7" key="1">
    <citation type="journal article" date="2004" name="Transplant. Proc.">
        <title>The novel molecule porcine OSR1 up-regulated expression on porcine endothelial cell by human peripheral blood mononuclear cell activation.</title>
        <authorList>
            <person name="Hu W."/>
            <person name="Cheng J."/>
            <person name="Lu X."/>
            <person name="Li S."/>
            <person name="Zeng L."/>
            <person name="Li Y."/>
        </authorList>
    </citation>
    <scope>NUCLEOTIDE SEQUENCE [MRNA]</scope>
</reference>
<feature type="initiator methionine" description="Removed" evidence="1">
    <location>
        <position position="1"/>
    </location>
</feature>
<feature type="chain" id="PRO_0000086458" description="Serine/threonine-protein kinase OSR1">
    <location>
        <begin position="2"/>
        <end position="529"/>
    </location>
</feature>
<feature type="domain" description="Protein kinase" evidence="4">
    <location>
        <begin position="17"/>
        <end position="291"/>
    </location>
</feature>
<feature type="region of interest" description="Disordered" evidence="5">
    <location>
        <begin position="315"/>
        <end position="360"/>
    </location>
</feature>
<feature type="compositionally biased region" description="Acidic residues" evidence="5">
    <location>
        <begin position="334"/>
        <end position="348"/>
    </location>
</feature>
<feature type="active site" description="Proton acceptor" evidence="3 4">
    <location>
        <position position="146"/>
    </location>
</feature>
<feature type="binding site" evidence="3 4">
    <location>
        <begin position="23"/>
        <end position="31"/>
    </location>
    <ligand>
        <name>ATP</name>
        <dbReference type="ChEBI" id="CHEBI:30616"/>
    </ligand>
</feature>
<feature type="binding site" evidence="1 4">
    <location>
        <position position="46"/>
    </location>
    <ligand>
        <name>ATP</name>
        <dbReference type="ChEBI" id="CHEBI:30616"/>
    </ligand>
</feature>
<feature type="modified residue" description="N-acetylserine" evidence="1">
    <location>
        <position position="2"/>
    </location>
</feature>
<feature type="modified residue" description="Phosphothreonine" evidence="2">
    <location>
        <position position="185"/>
    </location>
</feature>
<feature type="modified residue" description="Phosphothreonine" evidence="1">
    <location>
        <position position="310"/>
    </location>
</feature>
<feature type="modified residue" description="Phosphoserine" evidence="1">
    <location>
        <position position="324"/>
    </location>
</feature>
<feature type="modified residue" description="Phosphoserine" evidence="1">
    <location>
        <position position="325"/>
    </location>
</feature>
<feature type="modified residue" description="Phosphoserine" evidence="1">
    <location>
        <position position="339"/>
    </location>
</feature>
<feature type="modified residue" description="Phosphoserine" evidence="1">
    <location>
        <position position="347"/>
    </location>
</feature>
<feature type="modified residue" description="Phosphoserine" evidence="1">
    <location>
        <position position="359"/>
    </location>
</feature>
<feature type="modified residue" description="Phosphoserine" evidence="1">
    <location>
        <position position="429"/>
    </location>
</feature>
<dbReference type="EC" id="2.7.11.1"/>
<dbReference type="EMBL" id="AY271356">
    <property type="protein sequence ID" value="AAP32466.1"/>
    <property type="molecule type" value="mRNA"/>
</dbReference>
<dbReference type="RefSeq" id="NP_001302601.1">
    <property type="nucleotide sequence ID" value="NM_001315672.1"/>
</dbReference>
<dbReference type="RefSeq" id="NP_999507.1">
    <property type="nucleotide sequence ID" value="NM_214342.2"/>
</dbReference>
<dbReference type="SMR" id="Q863I2"/>
<dbReference type="FunCoup" id="Q863I2">
    <property type="interactions" value="2255"/>
</dbReference>
<dbReference type="STRING" id="9823.ENSSSCP00000070973"/>
<dbReference type="PaxDb" id="9823-ENSSSCP00000011997"/>
<dbReference type="PeptideAtlas" id="Q863I2"/>
<dbReference type="Ensembl" id="ENSSSCT00070024629.1">
    <property type="protein sequence ID" value="ENSSSCP00070020382.1"/>
    <property type="gene ID" value="ENSSSCG00070012557.1"/>
</dbReference>
<dbReference type="Ensembl" id="ENSSSCT00105063732">
    <property type="protein sequence ID" value="ENSSSCP00105045304"/>
    <property type="gene ID" value="ENSSSCG00105033468"/>
</dbReference>
<dbReference type="Ensembl" id="ENSSSCT00115010876">
    <property type="protein sequence ID" value="ENSSSCP00115010242"/>
    <property type="gene ID" value="ENSSSCG00115006285"/>
</dbReference>
<dbReference type="GeneID" id="397618"/>
<dbReference type="KEGG" id="ssc:397618"/>
<dbReference type="CTD" id="9943"/>
<dbReference type="eggNOG" id="KOG0582">
    <property type="taxonomic scope" value="Eukaryota"/>
</dbReference>
<dbReference type="InParanoid" id="Q863I2"/>
<dbReference type="OMA" id="KMRTANC"/>
<dbReference type="OrthoDB" id="8693905at2759"/>
<dbReference type="Proteomes" id="UP000008227">
    <property type="component" value="Unplaced"/>
</dbReference>
<dbReference type="Proteomes" id="UP000314985">
    <property type="component" value="Chromosome 13"/>
</dbReference>
<dbReference type="Proteomes" id="UP000694570">
    <property type="component" value="Unplaced"/>
</dbReference>
<dbReference type="Proteomes" id="UP000694571">
    <property type="component" value="Unplaced"/>
</dbReference>
<dbReference type="Proteomes" id="UP000694720">
    <property type="component" value="Unplaced"/>
</dbReference>
<dbReference type="Proteomes" id="UP000694722">
    <property type="component" value="Unplaced"/>
</dbReference>
<dbReference type="Proteomes" id="UP000694723">
    <property type="component" value="Unplaced"/>
</dbReference>
<dbReference type="Proteomes" id="UP000694724">
    <property type="component" value="Unplaced"/>
</dbReference>
<dbReference type="Proteomes" id="UP000694725">
    <property type="component" value="Unplaced"/>
</dbReference>
<dbReference type="Proteomes" id="UP000694726">
    <property type="component" value="Unplaced"/>
</dbReference>
<dbReference type="Proteomes" id="UP000694727">
    <property type="component" value="Unplaced"/>
</dbReference>
<dbReference type="Proteomes" id="UP000694728">
    <property type="component" value="Unplaced"/>
</dbReference>
<dbReference type="GO" id="GO:0005737">
    <property type="term" value="C:cytoplasm"/>
    <property type="evidence" value="ECO:0000318"/>
    <property type="project" value="GO_Central"/>
</dbReference>
<dbReference type="GO" id="GO:0005829">
    <property type="term" value="C:cytosol"/>
    <property type="evidence" value="ECO:0000318"/>
    <property type="project" value="GO_Central"/>
</dbReference>
<dbReference type="GO" id="GO:0005524">
    <property type="term" value="F:ATP binding"/>
    <property type="evidence" value="ECO:0000250"/>
    <property type="project" value="UniProtKB"/>
</dbReference>
<dbReference type="GO" id="GO:0000287">
    <property type="term" value="F:magnesium ion binding"/>
    <property type="evidence" value="ECO:0000250"/>
    <property type="project" value="UniProtKB"/>
</dbReference>
<dbReference type="GO" id="GO:0106310">
    <property type="term" value="F:protein serine kinase activity"/>
    <property type="evidence" value="ECO:0007669"/>
    <property type="project" value="RHEA"/>
</dbReference>
<dbReference type="GO" id="GO:0004674">
    <property type="term" value="F:protein serine/threonine kinase activity"/>
    <property type="evidence" value="ECO:0000250"/>
    <property type="project" value="UniProtKB"/>
</dbReference>
<dbReference type="GO" id="GO:0071474">
    <property type="term" value="P:cellular hyperosmotic response"/>
    <property type="evidence" value="ECO:0000318"/>
    <property type="project" value="GO_Central"/>
</dbReference>
<dbReference type="GO" id="GO:0035556">
    <property type="term" value="P:intracellular signal transduction"/>
    <property type="evidence" value="ECO:0000250"/>
    <property type="project" value="UniProtKB"/>
</dbReference>
<dbReference type="GO" id="GO:0010820">
    <property type="term" value="P:positive regulation of T cell chemotaxis"/>
    <property type="evidence" value="ECO:0000318"/>
    <property type="project" value="GO_Central"/>
</dbReference>
<dbReference type="GO" id="GO:0046777">
    <property type="term" value="P:protein autophosphorylation"/>
    <property type="evidence" value="ECO:0000250"/>
    <property type="project" value="UniProtKB"/>
</dbReference>
<dbReference type="GO" id="GO:0006468">
    <property type="term" value="P:protein phosphorylation"/>
    <property type="evidence" value="ECO:0000250"/>
    <property type="project" value="UniProtKB"/>
</dbReference>
<dbReference type="CDD" id="cd06610">
    <property type="entry name" value="STKc_OSR1_SPAK"/>
    <property type="match status" value="1"/>
</dbReference>
<dbReference type="FunFam" id="3.10.20.90:FF:000043">
    <property type="entry name" value="serine/threonine-protein kinase OSR1 isoform X1"/>
    <property type="match status" value="1"/>
</dbReference>
<dbReference type="FunFam" id="3.30.200.20:FF:000114">
    <property type="entry name" value="serine/threonine-protein kinase OSR1 isoform X1"/>
    <property type="match status" value="1"/>
</dbReference>
<dbReference type="FunFam" id="1.10.510.10:FF:000068">
    <property type="entry name" value="STE20/SPS1-related proline-alanine-rich protein kinase"/>
    <property type="match status" value="1"/>
</dbReference>
<dbReference type="Gene3D" id="3.10.20.90">
    <property type="entry name" value="Phosphatidylinositol 3-kinase Catalytic Subunit, Chain A, domain 1"/>
    <property type="match status" value="1"/>
</dbReference>
<dbReference type="Gene3D" id="3.30.200.20">
    <property type="entry name" value="Phosphorylase Kinase, domain 1"/>
    <property type="match status" value="1"/>
</dbReference>
<dbReference type="Gene3D" id="1.10.510.10">
    <property type="entry name" value="Transferase(Phosphotransferase) domain 1"/>
    <property type="match status" value="1"/>
</dbReference>
<dbReference type="InterPro" id="IPR011009">
    <property type="entry name" value="Kinase-like_dom_sf"/>
</dbReference>
<dbReference type="InterPro" id="IPR024678">
    <property type="entry name" value="Kinase_OSR1/WNK_CCT"/>
</dbReference>
<dbReference type="InterPro" id="IPR000719">
    <property type="entry name" value="Prot_kinase_dom"/>
</dbReference>
<dbReference type="InterPro" id="IPR017441">
    <property type="entry name" value="Protein_kinase_ATP_BS"/>
</dbReference>
<dbReference type="InterPro" id="IPR050629">
    <property type="entry name" value="STE20/SPS1-PAK"/>
</dbReference>
<dbReference type="PANTHER" id="PTHR48012:SF1">
    <property type="entry name" value="SERINE_THREONINE-PROTEIN KINASE OSR1"/>
    <property type="match status" value="1"/>
</dbReference>
<dbReference type="PANTHER" id="PTHR48012">
    <property type="entry name" value="STERILE20-LIKE KINASE, ISOFORM B-RELATED"/>
    <property type="match status" value="1"/>
</dbReference>
<dbReference type="Pfam" id="PF12202">
    <property type="entry name" value="OSR1_C"/>
    <property type="match status" value="1"/>
</dbReference>
<dbReference type="Pfam" id="PF00069">
    <property type="entry name" value="Pkinase"/>
    <property type="match status" value="1"/>
</dbReference>
<dbReference type="SMART" id="SM00220">
    <property type="entry name" value="S_TKc"/>
    <property type="match status" value="1"/>
</dbReference>
<dbReference type="SUPFAM" id="SSF56112">
    <property type="entry name" value="Protein kinase-like (PK-like)"/>
    <property type="match status" value="1"/>
</dbReference>
<dbReference type="PROSITE" id="PS00107">
    <property type="entry name" value="PROTEIN_KINASE_ATP"/>
    <property type="match status" value="1"/>
</dbReference>
<dbReference type="PROSITE" id="PS50011">
    <property type="entry name" value="PROTEIN_KINASE_DOM"/>
    <property type="match status" value="1"/>
</dbReference>
<comment type="function">
    <text evidence="1 2">Effector serine/threonine-protein kinase component of the WNK-SPAK/OSR1 kinase cascade, which is involved in various processes, such as ion transport, response to hypertonic stress and blood pressure (By similarity). Specifically recognizes and binds proteins with a RFXV motif (By similarity). Acts downstream of WNK kinases (WNK1, WNK2, WNK3 or WNK4): following activation by WNK kinases, catalyzes phosphorylation of ion cotransporters, such as SLC12A1/NKCC2, SLC12A2/NKCC1, SLC12A3/NCC, SLC12A5/KCC2 or SLC12A6/KCC3, regulating their activity (By similarity). Mediates regulatory volume increase in response to hyperosmotic stress by catalyzing phosphorylation of ion cotransporters SLC12A1/NKCC2, SLC12A2/NKCC1 and SLC12A6/KCC3 downstream of WNK1 and WNK3 kinases (By similarity). Phosphorylation of Na-K-Cl cotransporters SLC12A2/NKCC1 and SLC12A2/NKCC1 promote their activation and ion influx; simultaneously, phosphorylation of K-Cl cotransporters SLC12A5/KCC2 and SLC12A6/KCC3 inhibit their activity, blocking ion efflux (By similarity). Acts as a regulator of NaCl reabsorption in the distal nephron by mediating phosphorylation and activation of the thiazide-sensitive Na-Cl cotransporter SLC12A3/NCC in distal convoluted tubule cells of kidney downstream of WNK4 (By similarity). Also acts as a regulator of angiogenesis in endothelial cells downstream of WNK1 (By similarity). Acts as an activator of inward rectifier potassium channels KCNJ2/Kir2.1 and KCNJ4/Kir2.3 downstream of WNK1: recognizes and binds the RXFXV/I variant motif on KCNJ2/Kir2.1 and KCNJ4/Kir2.3 and regulates their localization to the cell membrane without mediating their phosphorylation (By similarity). Phosphorylates RELL1, RELL2, RELT and PAK1. Phosphorylates PLSCR1 in the presence of RELT (By similarity).</text>
</comment>
<comment type="catalytic activity">
    <reaction evidence="1">
        <text>L-seryl-[protein] + ATP = O-phospho-L-seryl-[protein] + ADP + H(+)</text>
        <dbReference type="Rhea" id="RHEA:17989"/>
        <dbReference type="Rhea" id="RHEA-COMP:9863"/>
        <dbReference type="Rhea" id="RHEA-COMP:11604"/>
        <dbReference type="ChEBI" id="CHEBI:15378"/>
        <dbReference type="ChEBI" id="CHEBI:29999"/>
        <dbReference type="ChEBI" id="CHEBI:30616"/>
        <dbReference type="ChEBI" id="CHEBI:83421"/>
        <dbReference type="ChEBI" id="CHEBI:456216"/>
        <dbReference type="EC" id="2.7.11.1"/>
    </reaction>
</comment>
<comment type="catalytic activity">
    <reaction evidence="1">
        <text>L-threonyl-[protein] + ATP = O-phospho-L-threonyl-[protein] + ADP + H(+)</text>
        <dbReference type="Rhea" id="RHEA:46608"/>
        <dbReference type="Rhea" id="RHEA-COMP:11060"/>
        <dbReference type="Rhea" id="RHEA-COMP:11605"/>
        <dbReference type="ChEBI" id="CHEBI:15378"/>
        <dbReference type="ChEBI" id="CHEBI:30013"/>
        <dbReference type="ChEBI" id="CHEBI:30616"/>
        <dbReference type="ChEBI" id="CHEBI:61977"/>
        <dbReference type="ChEBI" id="CHEBI:456216"/>
        <dbReference type="EC" id="2.7.11.1"/>
    </reaction>
</comment>
<comment type="cofactor">
    <cofactor evidence="1">
        <name>Mg(2+)</name>
        <dbReference type="ChEBI" id="CHEBI:18420"/>
    </cofactor>
</comment>
<comment type="activity regulation">
    <text evidence="1">Activated following phosphorylation by WNK kinases (WNK1, WNK2, WNK3 or WNK4).</text>
</comment>
<comment type="subcellular location">
    <subcellularLocation>
        <location evidence="1">Cytoplasm</location>
    </subcellularLocation>
</comment>
<comment type="PTM">
    <text evidence="1">Phosphorylation at Thr-185 by WNK kinases (WNK1, WNK2, WNK3 or WNK4) is required for activation. Autophosphorylated; promoting its activity.</text>
</comment>
<comment type="similarity">
    <text evidence="6">Belongs to the protein kinase superfamily. STE Ser/Thr protein kinase family. STE20 subfamily.</text>
</comment>
<proteinExistence type="evidence at transcript level"/>
<name>OXSR1_PIG</name>
<gene>
    <name evidence="1" type="primary">OXSR1</name>
    <name type="synonym">OSR1</name>
</gene>